<proteinExistence type="inferred from homology"/>
<feature type="chain" id="PRO_0000379972" description="Putative 8-oxo-dGTP diphosphatase">
    <location>
        <begin position="1"/>
        <end position="149"/>
    </location>
</feature>
<feature type="domain" description="Nudix hydrolase" evidence="2">
    <location>
        <begin position="1"/>
        <end position="123"/>
    </location>
</feature>
<feature type="short sequence motif" description="Nudix box">
    <location>
        <begin position="33"/>
        <end position="54"/>
    </location>
</feature>
<feature type="binding site" evidence="1">
    <location>
        <position position="48"/>
    </location>
    <ligand>
        <name>Mg(2+)</name>
        <dbReference type="ChEBI" id="CHEBI:18420"/>
    </ligand>
</feature>
<feature type="binding site" evidence="1">
    <location>
        <position position="52"/>
    </location>
    <ligand>
        <name>Mg(2+)</name>
        <dbReference type="ChEBI" id="CHEBI:18420"/>
    </ligand>
</feature>
<reference key="1">
    <citation type="submission" date="1997-03" db="EMBL/GenBank/DDBJ databases">
        <title>A 148 kbp sequence of the region between 35 and 47 degree of the Bacillus subtilis genome.</title>
        <authorList>
            <person name="Kasahara Y."/>
            <person name="Nakai S."/>
            <person name="Lee S."/>
            <person name="Sadaie Y."/>
            <person name="Ogasawara N."/>
        </authorList>
    </citation>
    <scope>NUCLEOTIDE SEQUENCE [GENOMIC DNA]</scope>
    <source>
        <strain>168</strain>
    </source>
</reference>
<reference key="2">
    <citation type="journal article" date="1997" name="Nature">
        <title>The complete genome sequence of the Gram-positive bacterium Bacillus subtilis.</title>
        <authorList>
            <person name="Kunst F."/>
            <person name="Ogasawara N."/>
            <person name="Moszer I."/>
            <person name="Albertini A.M."/>
            <person name="Alloni G."/>
            <person name="Azevedo V."/>
            <person name="Bertero M.G."/>
            <person name="Bessieres P."/>
            <person name="Bolotin A."/>
            <person name="Borchert S."/>
            <person name="Borriss R."/>
            <person name="Boursier L."/>
            <person name="Brans A."/>
            <person name="Braun M."/>
            <person name="Brignell S.C."/>
            <person name="Bron S."/>
            <person name="Brouillet S."/>
            <person name="Bruschi C.V."/>
            <person name="Caldwell B."/>
            <person name="Capuano V."/>
            <person name="Carter N.M."/>
            <person name="Choi S.-K."/>
            <person name="Codani J.-J."/>
            <person name="Connerton I.F."/>
            <person name="Cummings N.J."/>
            <person name="Daniel R.A."/>
            <person name="Denizot F."/>
            <person name="Devine K.M."/>
            <person name="Duesterhoeft A."/>
            <person name="Ehrlich S.D."/>
            <person name="Emmerson P.T."/>
            <person name="Entian K.-D."/>
            <person name="Errington J."/>
            <person name="Fabret C."/>
            <person name="Ferrari E."/>
            <person name="Foulger D."/>
            <person name="Fritz C."/>
            <person name="Fujita M."/>
            <person name="Fujita Y."/>
            <person name="Fuma S."/>
            <person name="Galizzi A."/>
            <person name="Galleron N."/>
            <person name="Ghim S.-Y."/>
            <person name="Glaser P."/>
            <person name="Goffeau A."/>
            <person name="Golightly E.J."/>
            <person name="Grandi G."/>
            <person name="Guiseppi G."/>
            <person name="Guy B.J."/>
            <person name="Haga K."/>
            <person name="Haiech J."/>
            <person name="Harwood C.R."/>
            <person name="Henaut A."/>
            <person name="Hilbert H."/>
            <person name="Holsappel S."/>
            <person name="Hosono S."/>
            <person name="Hullo M.-F."/>
            <person name="Itaya M."/>
            <person name="Jones L.-M."/>
            <person name="Joris B."/>
            <person name="Karamata D."/>
            <person name="Kasahara Y."/>
            <person name="Klaerr-Blanchard M."/>
            <person name="Klein C."/>
            <person name="Kobayashi Y."/>
            <person name="Koetter P."/>
            <person name="Koningstein G."/>
            <person name="Krogh S."/>
            <person name="Kumano M."/>
            <person name="Kurita K."/>
            <person name="Lapidus A."/>
            <person name="Lardinois S."/>
            <person name="Lauber J."/>
            <person name="Lazarevic V."/>
            <person name="Lee S.-M."/>
            <person name="Levine A."/>
            <person name="Liu H."/>
            <person name="Masuda S."/>
            <person name="Mauel C."/>
            <person name="Medigue C."/>
            <person name="Medina N."/>
            <person name="Mellado R.P."/>
            <person name="Mizuno M."/>
            <person name="Moestl D."/>
            <person name="Nakai S."/>
            <person name="Noback M."/>
            <person name="Noone D."/>
            <person name="O'Reilly M."/>
            <person name="Ogawa K."/>
            <person name="Ogiwara A."/>
            <person name="Oudega B."/>
            <person name="Park S.-H."/>
            <person name="Parro V."/>
            <person name="Pohl T.M."/>
            <person name="Portetelle D."/>
            <person name="Porwollik S."/>
            <person name="Prescott A.M."/>
            <person name="Presecan E."/>
            <person name="Pujic P."/>
            <person name="Purnelle B."/>
            <person name="Rapoport G."/>
            <person name="Rey M."/>
            <person name="Reynolds S."/>
            <person name="Rieger M."/>
            <person name="Rivolta C."/>
            <person name="Rocha E."/>
            <person name="Roche B."/>
            <person name="Rose M."/>
            <person name="Sadaie Y."/>
            <person name="Sato T."/>
            <person name="Scanlan E."/>
            <person name="Schleich S."/>
            <person name="Schroeter R."/>
            <person name="Scoffone F."/>
            <person name="Sekiguchi J."/>
            <person name="Sekowska A."/>
            <person name="Seror S.J."/>
            <person name="Serror P."/>
            <person name="Shin B.-S."/>
            <person name="Soldo B."/>
            <person name="Sorokin A."/>
            <person name="Tacconi E."/>
            <person name="Takagi T."/>
            <person name="Takahashi H."/>
            <person name="Takemaru K."/>
            <person name="Takeuchi M."/>
            <person name="Tamakoshi A."/>
            <person name="Tanaka T."/>
            <person name="Terpstra P."/>
            <person name="Tognoni A."/>
            <person name="Tosato V."/>
            <person name="Uchiyama S."/>
            <person name="Vandenbol M."/>
            <person name="Vannier F."/>
            <person name="Vassarotti A."/>
            <person name="Viari A."/>
            <person name="Wambutt R."/>
            <person name="Wedler E."/>
            <person name="Wedler H."/>
            <person name="Weitzenegger T."/>
            <person name="Winters P."/>
            <person name="Wipat A."/>
            <person name="Yamamoto H."/>
            <person name="Yamane K."/>
            <person name="Yasumoto K."/>
            <person name="Yata K."/>
            <person name="Yoshida K."/>
            <person name="Yoshikawa H.-F."/>
            <person name="Zumstein E."/>
            <person name="Yoshikawa H."/>
            <person name="Danchin A."/>
        </authorList>
    </citation>
    <scope>NUCLEOTIDE SEQUENCE [LARGE SCALE GENOMIC DNA]</scope>
    <source>
        <strain>168</strain>
    </source>
</reference>
<reference key="3">
    <citation type="journal article" date="2000" name="J. Gen. Appl. Microbiol.">
        <title>Genetic analysis of Bacillus subtilis mutator genes.</title>
        <authorList>
            <person name="Sasaki M."/>
            <person name="Yonemura Y."/>
            <person name="Kurusu Y."/>
        </authorList>
    </citation>
    <scope>DISRUPTION PHENOTYPE</scope>
    <source>
        <strain>168</strain>
    </source>
</reference>
<reference key="4">
    <citation type="journal article" date="2006" name="J. Bacteriol.">
        <title>YtkD and MutT protect vegetative cells but not spores of Bacillus subtilis from oxidative stress.</title>
        <authorList>
            <person name="Castellanos-Juarez F.X."/>
            <person name="Alvarez-Alvarez C."/>
            <person name="Yasbin R.E."/>
            <person name="Setlow B."/>
            <person name="Setlow P."/>
            <person name="Pedraza-Reyes M."/>
        </authorList>
    </citation>
    <scope>DISRUPTION PHENOTYPE IN GROWING CELLS</scope>
    <source>
        <strain>168 / PS832</strain>
    </source>
</reference>
<reference key="5">
    <citation type="journal article" date="2009" name="J. Bacteriol.">
        <title>Defects in the error prevention oxidized guanine system potentiate stationary-phase mutagenesis in Bacillus subtilis.</title>
        <authorList>
            <person name="Vidales L.E."/>
            <person name="Cardenas L.C."/>
            <person name="Robleto E."/>
            <person name="Yasbin R.E."/>
            <person name="Pedraza-Reyes M."/>
        </authorList>
    </citation>
    <scope>DISRUPTION PHENOTYPE IN STATIONARY PHASE CELLS</scope>
    <source>
        <strain>168 / YB955</strain>
    </source>
</reference>
<evidence type="ECO:0000250" key="1"/>
<evidence type="ECO:0000255" key="2">
    <source>
        <dbReference type="PROSITE-ProRule" id="PRU00794"/>
    </source>
</evidence>
<evidence type="ECO:0000269" key="3">
    <source>
    </source>
</evidence>
<evidence type="ECO:0000269" key="4">
    <source>
    </source>
</evidence>
<evidence type="ECO:0000269" key="5">
    <source>
    </source>
</evidence>
<evidence type="ECO:0000305" key="6"/>
<sequence>MYTQGAFVIVLNESQQILLVKRKDVPLWDLPGGRVDPGESAEEAAVREILEETGYNAALSAKIGVYQRPKFQDEQHLFFGSITGGQAMADGTETAGLKWVSPGRLPLFMVPNRKRQINDFKNGAQDVNVTVKDSGLLAAIDLLKRRLGK</sequence>
<organism>
    <name type="scientific">Bacillus subtilis (strain 168)</name>
    <dbReference type="NCBI Taxonomy" id="224308"/>
    <lineage>
        <taxon>Bacteria</taxon>
        <taxon>Bacillati</taxon>
        <taxon>Bacillota</taxon>
        <taxon>Bacilli</taxon>
        <taxon>Bacillales</taxon>
        <taxon>Bacillaceae</taxon>
        <taxon>Bacillus</taxon>
    </lineage>
</organism>
<gene>
    <name type="primary">mutT</name>
    <name type="ordered locus">BSU04330</name>
</gene>
<accession>P96590</accession>
<accession>Q797M2</accession>
<dbReference type="EC" id="3.6.1.55"/>
<dbReference type="EMBL" id="AB001488">
    <property type="protein sequence ID" value="BAA19270.1"/>
    <property type="molecule type" value="Genomic_DNA"/>
</dbReference>
<dbReference type="EMBL" id="AL009126">
    <property type="protein sequence ID" value="CAB12240.1"/>
    <property type="molecule type" value="Genomic_DNA"/>
</dbReference>
<dbReference type="PIR" id="D69663">
    <property type="entry name" value="D69663"/>
</dbReference>
<dbReference type="RefSeq" id="WP_003246544.1">
    <property type="nucleotide sequence ID" value="NZ_OZ025638.1"/>
</dbReference>
<dbReference type="SMR" id="P96590"/>
<dbReference type="FunCoup" id="P96590">
    <property type="interactions" value="166"/>
</dbReference>
<dbReference type="STRING" id="224308.BSU04330"/>
<dbReference type="PaxDb" id="224308-BSU04330"/>
<dbReference type="EnsemblBacteria" id="CAB12240">
    <property type="protein sequence ID" value="CAB12240"/>
    <property type="gene ID" value="BSU_04330"/>
</dbReference>
<dbReference type="GeneID" id="938242"/>
<dbReference type="KEGG" id="bsu:BSU04330"/>
<dbReference type="PATRIC" id="fig|224308.179.peg.459"/>
<dbReference type="eggNOG" id="COG0494">
    <property type="taxonomic scope" value="Bacteria"/>
</dbReference>
<dbReference type="InParanoid" id="P96590"/>
<dbReference type="OrthoDB" id="9804563at2"/>
<dbReference type="PhylomeDB" id="P96590"/>
<dbReference type="BioCyc" id="BSUB:BSU04330-MONOMER"/>
<dbReference type="Proteomes" id="UP000001570">
    <property type="component" value="Chromosome"/>
</dbReference>
<dbReference type="GO" id="GO:0035539">
    <property type="term" value="F:8-oxo-7,8-dihydrodeoxyguanosine triphosphate pyrophosphatase activity"/>
    <property type="evidence" value="ECO:0007669"/>
    <property type="project" value="UniProtKB-EC"/>
</dbReference>
<dbReference type="GO" id="GO:0046872">
    <property type="term" value="F:metal ion binding"/>
    <property type="evidence" value="ECO:0007669"/>
    <property type="project" value="UniProtKB-KW"/>
</dbReference>
<dbReference type="GO" id="GO:0006281">
    <property type="term" value="P:DNA repair"/>
    <property type="evidence" value="ECO:0007669"/>
    <property type="project" value="UniProtKB-KW"/>
</dbReference>
<dbReference type="GO" id="GO:0006260">
    <property type="term" value="P:DNA replication"/>
    <property type="evidence" value="ECO:0007669"/>
    <property type="project" value="UniProtKB-KW"/>
</dbReference>
<dbReference type="CDD" id="cd02883">
    <property type="entry name" value="NUDIX_Hydrolase"/>
    <property type="match status" value="1"/>
</dbReference>
<dbReference type="Gene3D" id="3.90.79.10">
    <property type="entry name" value="Nucleoside Triphosphate Pyrophosphohydrolase"/>
    <property type="match status" value="1"/>
</dbReference>
<dbReference type="InterPro" id="IPR020476">
    <property type="entry name" value="Nudix_hydrolase"/>
</dbReference>
<dbReference type="InterPro" id="IPR015797">
    <property type="entry name" value="NUDIX_hydrolase-like_dom_sf"/>
</dbReference>
<dbReference type="InterPro" id="IPR020084">
    <property type="entry name" value="NUDIX_hydrolase_CS"/>
</dbReference>
<dbReference type="InterPro" id="IPR000086">
    <property type="entry name" value="NUDIX_hydrolase_dom"/>
</dbReference>
<dbReference type="PANTHER" id="PTHR43046:SF2">
    <property type="entry name" value="8-OXO-DGTP DIPHOSPHATASE-RELATED"/>
    <property type="match status" value="1"/>
</dbReference>
<dbReference type="PANTHER" id="PTHR43046">
    <property type="entry name" value="GDP-MANNOSE MANNOSYL HYDROLASE"/>
    <property type="match status" value="1"/>
</dbReference>
<dbReference type="Pfam" id="PF00293">
    <property type="entry name" value="NUDIX"/>
    <property type="match status" value="1"/>
</dbReference>
<dbReference type="PRINTS" id="PR00502">
    <property type="entry name" value="NUDIXFAMILY"/>
</dbReference>
<dbReference type="SUPFAM" id="SSF55811">
    <property type="entry name" value="Nudix"/>
    <property type="match status" value="1"/>
</dbReference>
<dbReference type="PROSITE" id="PS51462">
    <property type="entry name" value="NUDIX"/>
    <property type="match status" value="1"/>
</dbReference>
<dbReference type="PROSITE" id="PS00893">
    <property type="entry name" value="NUDIX_BOX"/>
    <property type="match status" value="1"/>
</dbReference>
<protein>
    <recommendedName>
        <fullName>Putative 8-oxo-dGTP diphosphatase</fullName>
        <shortName>8-oxo-dGTPase</shortName>
        <ecNumber>3.6.1.55</ecNumber>
    </recommendedName>
    <alternativeName>
        <fullName>7,8-dihydro-8-oxoguanine-triphosphatase</fullName>
    </alternativeName>
    <alternativeName>
        <fullName>Mutator protein MutT</fullName>
    </alternativeName>
    <alternativeName>
        <fullName>dGTP pyrophosphohydrolase</fullName>
    </alternativeName>
</protein>
<name>MUTT_BACSU</name>
<keyword id="KW-0227">DNA damage</keyword>
<keyword id="KW-0234">DNA repair</keyword>
<keyword id="KW-0235">DNA replication</keyword>
<keyword id="KW-0378">Hydrolase</keyword>
<keyword id="KW-0460">Magnesium</keyword>
<keyword id="KW-0464">Manganese</keyword>
<keyword id="KW-0479">Metal-binding</keyword>
<keyword id="KW-0515">Mutator protein</keyword>
<keyword id="KW-1185">Reference proteome</keyword>
<comment type="function">
    <text evidence="1">May be involved in the GO system responsible for removing an oxidatively damaged form of guanine (7,8-dihydro-8-oxoguanine, 8-oxo-dGTP) from DNA and the nucleotide pool. 8-oxo-dGTP is inserted opposite dA and dC residues of template DNA with almost equal efficiency thus leading to A.T to G.C transversions. MutT specifically degrades 8-oxo-dGTP to the monophosphate (By similarity). Functions, in conjunction with ytkD, to protect vegetatively growing cells from DNA-damaging agents such as H(2)O(2) or t-BHP (t-butylhydroperoxide). The 2 proteins do not however protect spores.</text>
</comment>
<comment type="catalytic activity">
    <reaction>
        <text>8-oxo-dGTP + H2O = 8-oxo-dGMP + diphosphate + H(+)</text>
        <dbReference type="Rhea" id="RHEA:31575"/>
        <dbReference type="ChEBI" id="CHEBI:15377"/>
        <dbReference type="ChEBI" id="CHEBI:15378"/>
        <dbReference type="ChEBI" id="CHEBI:33019"/>
        <dbReference type="ChEBI" id="CHEBI:63224"/>
        <dbReference type="ChEBI" id="CHEBI:77896"/>
        <dbReference type="EC" id="3.6.1.55"/>
    </reaction>
</comment>
<comment type="cofactor">
    <cofactor evidence="1">
        <name>Mg(2+)</name>
        <dbReference type="ChEBI" id="CHEBI:18420"/>
    </cofactor>
    <cofactor evidence="1">
        <name>Mn(2+)</name>
        <dbReference type="ChEBI" id="CHEBI:29035"/>
    </cofactor>
</comment>
<comment type="disruption phenotype">
    <text evidence="3 4 5">Growing cells lacking this gene have an unchanged spontaneous mutation frequency, even in triple mutT/yjhB/yvcI disruptions (PubMed:12483591), however they are more sensitive to DNA-damaging agents such as H(2)O(2) or t-BHP (PubMed:16513759). A double ytkD/mutT disruption has a greater mutation frequency than the ytkD disruption, as well as an increased sensitivity to DNA-damaging agents (PubMed:16513759). These properties are also seen in stationary phase cells (PubMed:19011023).</text>
</comment>
<comment type="similarity">
    <text evidence="6">Belongs to the Nudix hydrolase family.</text>
</comment>